<sequence length="401" mass="42095">MKHAYIVDAIRTPFGRYAGGLAAVRADDLGAIPIAALIERNPSVNWAQVDDVIYGCANQAGEDNRNVGRMSALLAGLPVEVPATTVNRLCGSSLDAIAMAARAIKAGEAHLIIAGGVESMSRAPYVMGKSEGAFGRTQKIEDTTMGWRFINPKLKAMYGVDTMPQTAENVAEQFGIQREDQDQFAYTSQQRTAAAQAKGYFAKEIVPVTIPQRKGEPVVIDTDEHPRASTTLEGLAKLKGVVKPEGSVTAGNASGINDGAAAVLIASDEAVAQYQLKARAKIIASTTVGIEPRIMGFAPAPAIKKLLKQANLTLDQMDVIELNEAFAAQALACTRDLGLADDDARVNPNGGAIALGHPLGASGARLVTTALNQLEQSGGKYALCSMCIGVGQGIALIIERV</sequence>
<comment type="function">
    <text>Catalyzes thiolytic cleavage of beta-ketoadipyl-CoA to succinyl-CoA and acetyl-CoA.</text>
</comment>
<comment type="catalytic activity">
    <reaction>
        <text>succinyl-CoA + acetyl-CoA = 3-oxoadipyl-CoA + CoA</text>
        <dbReference type="Rhea" id="RHEA:19481"/>
        <dbReference type="ChEBI" id="CHEBI:57287"/>
        <dbReference type="ChEBI" id="CHEBI:57288"/>
        <dbReference type="ChEBI" id="CHEBI:57292"/>
        <dbReference type="ChEBI" id="CHEBI:57348"/>
        <dbReference type="EC" id="2.3.1.174"/>
    </reaction>
</comment>
<comment type="pathway">
    <text>Aromatic compound metabolism; beta-ketoadipate pathway; acetyl-CoA and succinyl-CoA from 3-oxoadipate: step 2/2.</text>
</comment>
<comment type="similarity">
    <text evidence="3">Belongs to the thiolase-like superfamily. Thiolase family.</text>
</comment>
<keyword id="KW-0012">Acyltransferase</keyword>
<keyword id="KW-0058">Aromatic hydrocarbons catabolism</keyword>
<keyword id="KW-0903">Direct protein sequencing</keyword>
<keyword id="KW-0808">Transferase</keyword>
<dbReference type="EC" id="2.3.1.174"/>
<dbReference type="EMBL" id="L05770">
    <property type="protein sequence ID" value="AAC37148.1"/>
    <property type="molecule type" value="Genomic_DNA"/>
</dbReference>
<dbReference type="EMBL" id="CR543861">
    <property type="protein sequence ID" value="CAG68548.1"/>
    <property type="molecule type" value="Genomic_DNA"/>
</dbReference>
<dbReference type="RefSeq" id="WP_004926618.1">
    <property type="nucleotide sequence ID" value="NC_005966.1"/>
</dbReference>
<dbReference type="SMR" id="Q43974"/>
<dbReference type="GeneID" id="45234093"/>
<dbReference type="KEGG" id="aci:ACIAD1706"/>
<dbReference type="eggNOG" id="COG0183">
    <property type="taxonomic scope" value="Bacteria"/>
</dbReference>
<dbReference type="HOGENOM" id="CLU_031026_2_2_6"/>
<dbReference type="OrthoDB" id="9764638at2"/>
<dbReference type="BioCyc" id="ASP62977:ACIAD_RS07860-MONOMER"/>
<dbReference type="UniPathway" id="UPA00157">
    <property type="reaction ID" value="UER00263"/>
</dbReference>
<dbReference type="Proteomes" id="UP000000430">
    <property type="component" value="Chromosome"/>
</dbReference>
<dbReference type="GO" id="GO:0033812">
    <property type="term" value="F:3-oxoadipyl-CoA thiolase activity"/>
    <property type="evidence" value="ECO:0007669"/>
    <property type="project" value="UniProtKB-EC"/>
</dbReference>
<dbReference type="GO" id="GO:0019619">
    <property type="term" value="P:3,4-dihydroxybenzoate catabolic process"/>
    <property type="evidence" value="ECO:0007669"/>
    <property type="project" value="InterPro"/>
</dbReference>
<dbReference type="GO" id="GO:0042952">
    <property type="term" value="P:beta-ketoadipate pathway"/>
    <property type="evidence" value="ECO:0007669"/>
    <property type="project" value="UniProtKB-UniPathway"/>
</dbReference>
<dbReference type="CDD" id="cd00751">
    <property type="entry name" value="thiolase"/>
    <property type="match status" value="1"/>
</dbReference>
<dbReference type="FunFam" id="3.40.47.10:FF:000010">
    <property type="entry name" value="Acetyl-CoA acetyltransferase (Thiolase)"/>
    <property type="match status" value="1"/>
</dbReference>
<dbReference type="Gene3D" id="3.40.47.10">
    <property type="match status" value="1"/>
</dbReference>
<dbReference type="InterPro" id="IPR012793">
    <property type="entry name" value="PcaF"/>
</dbReference>
<dbReference type="InterPro" id="IPR002155">
    <property type="entry name" value="Thiolase"/>
</dbReference>
<dbReference type="InterPro" id="IPR016039">
    <property type="entry name" value="Thiolase-like"/>
</dbReference>
<dbReference type="InterPro" id="IPR020615">
    <property type="entry name" value="Thiolase_acyl_enz_int_AS"/>
</dbReference>
<dbReference type="InterPro" id="IPR020610">
    <property type="entry name" value="Thiolase_AS"/>
</dbReference>
<dbReference type="InterPro" id="IPR020617">
    <property type="entry name" value="Thiolase_C"/>
</dbReference>
<dbReference type="InterPro" id="IPR020613">
    <property type="entry name" value="Thiolase_CS"/>
</dbReference>
<dbReference type="InterPro" id="IPR020616">
    <property type="entry name" value="Thiolase_N"/>
</dbReference>
<dbReference type="NCBIfam" id="TIGR01930">
    <property type="entry name" value="AcCoA-C-Actrans"/>
    <property type="match status" value="1"/>
</dbReference>
<dbReference type="NCBIfam" id="TIGR02430">
    <property type="entry name" value="pcaF"/>
    <property type="match status" value="1"/>
</dbReference>
<dbReference type="NCBIfam" id="NF006551">
    <property type="entry name" value="PRK09050.1"/>
    <property type="match status" value="1"/>
</dbReference>
<dbReference type="PANTHER" id="PTHR18919:SF107">
    <property type="entry name" value="ACETYL-COA ACETYLTRANSFERASE, CYTOSOLIC"/>
    <property type="match status" value="1"/>
</dbReference>
<dbReference type="PANTHER" id="PTHR18919">
    <property type="entry name" value="ACETYL-COA C-ACYLTRANSFERASE"/>
    <property type="match status" value="1"/>
</dbReference>
<dbReference type="Pfam" id="PF02803">
    <property type="entry name" value="Thiolase_C"/>
    <property type="match status" value="1"/>
</dbReference>
<dbReference type="Pfam" id="PF00108">
    <property type="entry name" value="Thiolase_N"/>
    <property type="match status" value="1"/>
</dbReference>
<dbReference type="PIRSF" id="PIRSF000429">
    <property type="entry name" value="Ac-CoA_Ac_transf"/>
    <property type="match status" value="1"/>
</dbReference>
<dbReference type="SUPFAM" id="SSF53901">
    <property type="entry name" value="Thiolase-like"/>
    <property type="match status" value="2"/>
</dbReference>
<dbReference type="PROSITE" id="PS00098">
    <property type="entry name" value="THIOLASE_1"/>
    <property type="match status" value="1"/>
</dbReference>
<dbReference type="PROSITE" id="PS00737">
    <property type="entry name" value="THIOLASE_2"/>
    <property type="match status" value="1"/>
</dbReference>
<dbReference type="PROSITE" id="PS00099">
    <property type="entry name" value="THIOLASE_3"/>
    <property type="match status" value="1"/>
</dbReference>
<evidence type="ECO:0000250" key="1"/>
<evidence type="ECO:0000255" key="2">
    <source>
        <dbReference type="PROSITE-ProRule" id="PRU10020"/>
    </source>
</evidence>
<evidence type="ECO:0000305" key="3"/>
<reference key="1">
    <citation type="journal article" date="1994" name="Gene">
        <title>Contrasting patterns of evolutionary divergence within the Acinetobacter calcoaceticus pca operon.</title>
        <authorList>
            <person name="Kowalchuk G.A."/>
            <person name="Hartnett G.B."/>
            <person name="Benson A."/>
            <person name="Houghton J.E."/>
            <person name="Ngai K.-L."/>
            <person name="Ornston L.N."/>
        </authorList>
    </citation>
    <scope>NUCLEOTIDE SEQUENCE [GENOMIC DNA]</scope>
    <scope>PROTEIN SEQUENCE OF 1-55</scope>
</reference>
<reference key="2">
    <citation type="journal article" date="2004" name="Nucleic Acids Res.">
        <title>Unique features revealed by the genome sequence of Acinetobacter sp. ADP1, a versatile and naturally transformation competent bacterium.</title>
        <authorList>
            <person name="Barbe V."/>
            <person name="Vallenet D."/>
            <person name="Fonknechten N."/>
            <person name="Kreimeyer A."/>
            <person name="Oztas S."/>
            <person name="Labarre L."/>
            <person name="Cruveiller S."/>
            <person name="Robert C."/>
            <person name="Duprat S."/>
            <person name="Wincker P."/>
            <person name="Ornston L.N."/>
            <person name="Weissenbach J."/>
            <person name="Marliere P."/>
            <person name="Cohen G.N."/>
            <person name="Medigue C."/>
        </authorList>
    </citation>
    <scope>NUCLEOTIDE SEQUENCE [LARGE SCALE GENOMIC DNA]</scope>
    <source>
        <strain>ATCC 33305 / BD413 / ADP1</strain>
    </source>
</reference>
<protein>
    <recommendedName>
        <fullName>Beta-ketoadipyl-CoA thiolase</fullName>
        <ecNumber>2.3.1.174</ecNumber>
    </recommendedName>
    <alternativeName>
        <fullName>3-oxoadipyl-CoA thiolase</fullName>
    </alternativeName>
</protein>
<name>PCAF_ACIAD</name>
<gene>
    <name type="primary">pcaF</name>
    <name type="ordered locus">ACIAD1706</name>
</gene>
<organism>
    <name type="scientific">Acinetobacter baylyi (strain ATCC 33305 / BD413 / ADP1)</name>
    <dbReference type="NCBI Taxonomy" id="62977"/>
    <lineage>
        <taxon>Bacteria</taxon>
        <taxon>Pseudomonadati</taxon>
        <taxon>Pseudomonadota</taxon>
        <taxon>Gammaproteobacteria</taxon>
        <taxon>Moraxellales</taxon>
        <taxon>Moraxellaceae</taxon>
        <taxon>Acinetobacter</taxon>
    </lineage>
</organism>
<accession>Q43974</accession>
<proteinExistence type="evidence at protein level"/>
<feature type="chain" id="PRO_0000206423" description="Beta-ketoadipyl-CoA thiolase">
    <location>
        <begin position="1"/>
        <end position="401"/>
    </location>
</feature>
<feature type="active site" description="Acyl-thioester intermediate" evidence="1">
    <location>
        <position position="90"/>
    </location>
</feature>
<feature type="active site" description="Proton acceptor" evidence="2">
    <location>
        <position position="357"/>
    </location>
</feature>
<feature type="active site" description="Proton acceptor" evidence="2">
    <location>
        <position position="387"/>
    </location>
</feature>